<protein>
    <recommendedName>
        <fullName evidence="5">N-acetyltransferase 8F1</fullName>
        <ecNumber evidence="2">2.3.1.-</ecNumber>
    </recommendedName>
    <alternativeName>
        <fullName evidence="4">Camello-like protein 1</fullName>
    </alternativeName>
    <alternativeName>
        <fullName evidence="10">GCN5-related N-acetyltransferase 8, family member 1</fullName>
    </alternativeName>
</protein>
<dbReference type="EC" id="2.3.1.-" evidence="2"/>
<dbReference type="EMBL" id="AF163314">
    <property type="protein sequence ID" value="AAF80483.1"/>
    <property type="molecule type" value="mRNA"/>
</dbReference>
<dbReference type="EMBL" id="AK002975">
    <property type="protein sequence ID" value="BAB22489.1"/>
    <property type="molecule type" value="mRNA"/>
</dbReference>
<dbReference type="EMBL" id="AK003301">
    <property type="protein sequence ID" value="BAB22702.1"/>
    <property type="molecule type" value="mRNA"/>
</dbReference>
<dbReference type="EMBL" id="BC010796">
    <property type="protein sequence ID" value="AAH10796.1"/>
    <property type="molecule type" value="mRNA"/>
</dbReference>
<dbReference type="CCDS" id="CCDS20304.3"/>
<dbReference type="RefSeq" id="NP_075649.3">
    <property type="nucleotide sequence ID" value="NM_023160.3"/>
</dbReference>
<dbReference type="FunCoup" id="Q9JIZ0">
    <property type="interactions" value="141"/>
</dbReference>
<dbReference type="STRING" id="10090.ENSMUSP00000158936"/>
<dbReference type="GlyGen" id="Q9JIZ0">
    <property type="glycosylation" value="1 site, 1 O-linked glycan (1 site)"/>
</dbReference>
<dbReference type="iPTMnet" id="Q9JIZ0"/>
<dbReference type="PhosphoSitePlus" id="Q9JIZ0"/>
<dbReference type="SwissPalm" id="Q9JIZ0"/>
<dbReference type="jPOST" id="Q9JIZ0"/>
<dbReference type="PaxDb" id="10090-ENSMUSP00000124488"/>
<dbReference type="PeptideAtlas" id="Q9JIZ0"/>
<dbReference type="ProteomicsDB" id="283445"/>
<dbReference type="Pumba" id="Q9JIZ0"/>
<dbReference type="DNASU" id="66116"/>
<dbReference type="Ensembl" id="ENSMUST00000161198.4">
    <property type="protein sequence ID" value="ENSMUSP00000124488.4"/>
    <property type="gene ID" value="ENSMUSG00000057103.12"/>
</dbReference>
<dbReference type="GeneID" id="66116"/>
<dbReference type="KEGG" id="mmu:66116"/>
<dbReference type="AGR" id="MGI:1913366"/>
<dbReference type="CTD" id="66116"/>
<dbReference type="MGI" id="MGI:1913366">
    <property type="gene designation" value="Nat8f1"/>
</dbReference>
<dbReference type="VEuPathDB" id="HostDB:ENSMUSG00000057103"/>
<dbReference type="eggNOG" id="KOG3139">
    <property type="taxonomic scope" value="Eukaryota"/>
</dbReference>
<dbReference type="GeneTree" id="ENSGT00950000182932"/>
<dbReference type="InParanoid" id="Q9JIZ0"/>
<dbReference type="OrthoDB" id="41532at2759"/>
<dbReference type="PhylomeDB" id="Q9JIZ0"/>
<dbReference type="BioGRID-ORCS" id="66116">
    <property type="hits" value="0 hits in 79 CRISPR screens"/>
</dbReference>
<dbReference type="ChiTaRS" id="Nat8f1">
    <property type="organism name" value="mouse"/>
</dbReference>
<dbReference type="PRO" id="PR:Q9JIZ0"/>
<dbReference type="Proteomes" id="UP000000589">
    <property type="component" value="Chromosome 6"/>
</dbReference>
<dbReference type="RNAct" id="Q9JIZ0">
    <property type="molecule type" value="protein"/>
</dbReference>
<dbReference type="Bgee" id="ENSMUSG00000057103">
    <property type="expression patterns" value="Expressed in right kidney and 180 other cell types or tissues"/>
</dbReference>
<dbReference type="ExpressionAtlas" id="Q9JIZ0">
    <property type="expression patterns" value="baseline and differential"/>
</dbReference>
<dbReference type="GO" id="GO:0005783">
    <property type="term" value="C:endoplasmic reticulum"/>
    <property type="evidence" value="ECO:0000247"/>
    <property type="project" value="MGI"/>
</dbReference>
<dbReference type="GO" id="GO:0005794">
    <property type="term" value="C:Golgi apparatus"/>
    <property type="evidence" value="ECO:0000247"/>
    <property type="project" value="MGI"/>
</dbReference>
<dbReference type="GO" id="GO:0016020">
    <property type="term" value="C:membrane"/>
    <property type="evidence" value="ECO:0000303"/>
    <property type="project" value="UniProtKB"/>
</dbReference>
<dbReference type="GO" id="GO:0005743">
    <property type="term" value="C:mitochondrial inner membrane"/>
    <property type="evidence" value="ECO:0007005"/>
    <property type="project" value="MGI"/>
</dbReference>
<dbReference type="GO" id="GO:0008080">
    <property type="term" value="F:N-acetyltransferase activity"/>
    <property type="evidence" value="ECO:0000303"/>
    <property type="project" value="UniProtKB"/>
</dbReference>
<dbReference type="GO" id="GO:0001702">
    <property type="term" value="P:gastrulation with mouth forming second"/>
    <property type="evidence" value="ECO:0000303"/>
    <property type="project" value="UniProtKB"/>
</dbReference>
<dbReference type="GO" id="GO:0007162">
    <property type="term" value="P:negative regulation of cell adhesion"/>
    <property type="evidence" value="ECO:0000247"/>
    <property type="project" value="MGI"/>
</dbReference>
<dbReference type="CDD" id="cd04301">
    <property type="entry name" value="NAT_SF"/>
    <property type="match status" value="1"/>
</dbReference>
<dbReference type="FunFam" id="3.40.630.30:FF:000118">
    <property type="entry name" value="N-acetyltransferase family 8 member 3"/>
    <property type="match status" value="1"/>
</dbReference>
<dbReference type="Gene3D" id="3.40.630.30">
    <property type="match status" value="1"/>
</dbReference>
<dbReference type="InterPro" id="IPR016181">
    <property type="entry name" value="Acyl_CoA_acyltransferase"/>
</dbReference>
<dbReference type="InterPro" id="IPR000182">
    <property type="entry name" value="GNAT_dom"/>
</dbReference>
<dbReference type="InterPro" id="IPR050769">
    <property type="entry name" value="NAT_camello-type"/>
</dbReference>
<dbReference type="PANTHER" id="PTHR13947">
    <property type="entry name" value="GNAT FAMILY N-ACETYLTRANSFERASE"/>
    <property type="match status" value="1"/>
</dbReference>
<dbReference type="PANTHER" id="PTHR13947:SF53">
    <property type="entry name" value="N-ACETYLTRANSFERASE 8B-RELATED"/>
    <property type="match status" value="1"/>
</dbReference>
<dbReference type="Pfam" id="PF00583">
    <property type="entry name" value="Acetyltransf_1"/>
    <property type="match status" value="1"/>
</dbReference>
<dbReference type="SUPFAM" id="SSF55729">
    <property type="entry name" value="Acyl-CoA N-acyltransferases (Nat)"/>
    <property type="match status" value="1"/>
</dbReference>
<dbReference type="PROSITE" id="PS51186">
    <property type="entry name" value="GNAT"/>
    <property type="match status" value="1"/>
</dbReference>
<feature type="chain" id="PRO_0000284686" description="N-acetyltransferase 8F1">
    <location>
        <begin position="1"/>
        <end position="222"/>
    </location>
</feature>
<feature type="transmembrane region" description="Helical" evidence="1">
    <location>
        <begin position="53"/>
        <end position="73"/>
    </location>
</feature>
<feature type="domain" description="N-acetyltransferase" evidence="2">
    <location>
        <begin position="69"/>
        <end position="220"/>
    </location>
</feature>
<feature type="sequence conflict" description="In Ref. 3; AAH10796." evidence="5" ref="3">
    <original>A</original>
    <variation>T</variation>
    <location>
        <position position="196"/>
    </location>
</feature>
<reference evidence="6" key="1">
    <citation type="journal article" date="2001" name="Dev. Biol.">
        <title>Overexpression of camello, a member of a novel protein family, reduces blastomere adhesion and inhibits gastrulation in Xenopus laevis.</title>
        <authorList>
            <person name="Popsueva A.E."/>
            <person name="Luchinskaya N.N."/>
            <person name="Ludwig A.V."/>
            <person name="Zinovjeva O.Y."/>
            <person name="Poteryaev D.A."/>
            <person name="Feigelman M.M."/>
            <person name="Ponomarev M.B."/>
            <person name="Berekelya L."/>
            <person name="Belyavsky A.V."/>
        </authorList>
    </citation>
    <scope>NUCLEOTIDE SEQUENCE [MRNA]</scope>
</reference>
<reference evidence="9" key="2">
    <citation type="journal article" date="2005" name="Science">
        <title>The transcriptional landscape of the mammalian genome.</title>
        <authorList>
            <person name="Carninci P."/>
            <person name="Kasukawa T."/>
            <person name="Katayama S."/>
            <person name="Gough J."/>
            <person name="Frith M.C."/>
            <person name="Maeda N."/>
            <person name="Oyama R."/>
            <person name="Ravasi T."/>
            <person name="Lenhard B."/>
            <person name="Wells C."/>
            <person name="Kodzius R."/>
            <person name="Shimokawa K."/>
            <person name="Bajic V.B."/>
            <person name="Brenner S.E."/>
            <person name="Batalov S."/>
            <person name="Forrest A.R."/>
            <person name="Zavolan M."/>
            <person name="Davis M.J."/>
            <person name="Wilming L.G."/>
            <person name="Aidinis V."/>
            <person name="Allen J.E."/>
            <person name="Ambesi-Impiombato A."/>
            <person name="Apweiler R."/>
            <person name="Aturaliya R.N."/>
            <person name="Bailey T.L."/>
            <person name="Bansal M."/>
            <person name="Baxter L."/>
            <person name="Beisel K.W."/>
            <person name="Bersano T."/>
            <person name="Bono H."/>
            <person name="Chalk A.M."/>
            <person name="Chiu K.P."/>
            <person name="Choudhary V."/>
            <person name="Christoffels A."/>
            <person name="Clutterbuck D.R."/>
            <person name="Crowe M.L."/>
            <person name="Dalla E."/>
            <person name="Dalrymple B.P."/>
            <person name="de Bono B."/>
            <person name="Della Gatta G."/>
            <person name="di Bernardo D."/>
            <person name="Down T."/>
            <person name="Engstrom P."/>
            <person name="Fagiolini M."/>
            <person name="Faulkner G."/>
            <person name="Fletcher C.F."/>
            <person name="Fukushima T."/>
            <person name="Furuno M."/>
            <person name="Futaki S."/>
            <person name="Gariboldi M."/>
            <person name="Georgii-Hemming P."/>
            <person name="Gingeras T.R."/>
            <person name="Gojobori T."/>
            <person name="Green R.E."/>
            <person name="Gustincich S."/>
            <person name="Harbers M."/>
            <person name="Hayashi Y."/>
            <person name="Hensch T.K."/>
            <person name="Hirokawa N."/>
            <person name="Hill D."/>
            <person name="Huminiecki L."/>
            <person name="Iacono M."/>
            <person name="Ikeo K."/>
            <person name="Iwama A."/>
            <person name="Ishikawa T."/>
            <person name="Jakt M."/>
            <person name="Kanapin A."/>
            <person name="Katoh M."/>
            <person name="Kawasawa Y."/>
            <person name="Kelso J."/>
            <person name="Kitamura H."/>
            <person name="Kitano H."/>
            <person name="Kollias G."/>
            <person name="Krishnan S.P."/>
            <person name="Kruger A."/>
            <person name="Kummerfeld S.K."/>
            <person name="Kurochkin I.V."/>
            <person name="Lareau L.F."/>
            <person name="Lazarevic D."/>
            <person name="Lipovich L."/>
            <person name="Liu J."/>
            <person name="Liuni S."/>
            <person name="McWilliam S."/>
            <person name="Madan Babu M."/>
            <person name="Madera M."/>
            <person name="Marchionni L."/>
            <person name="Matsuda H."/>
            <person name="Matsuzawa S."/>
            <person name="Miki H."/>
            <person name="Mignone F."/>
            <person name="Miyake S."/>
            <person name="Morris K."/>
            <person name="Mottagui-Tabar S."/>
            <person name="Mulder N."/>
            <person name="Nakano N."/>
            <person name="Nakauchi H."/>
            <person name="Ng P."/>
            <person name="Nilsson R."/>
            <person name="Nishiguchi S."/>
            <person name="Nishikawa S."/>
            <person name="Nori F."/>
            <person name="Ohara O."/>
            <person name="Okazaki Y."/>
            <person name="Orlando V."/>
            <person name="Pang K.C."/>
            <person name="Pavan W.J."/>
            <person name="Pavesi G."/>
            <person name="Pesole G."/>
            <person name="Petrovsky N."/>
            <person name="Piazza S."/>
            <person name="Reed J."/>
            <person name="Reid J.F."/>
            <person name="Ring B.Z."/>
            <person name="Ringwald M."/>
            <person name="Rost B."/>
            <person name="Ruan Y."/>
            <person name="Salzberg S.L."/>
            <person name="Sandelin A."/>
            <person name="Schneider C."/>
            <person name="Schoenbach C."/>
            <person name="Sekiguchi K."/>
            <person name="Semple C.A."/>
            <person name="Seno S."/>
            <person name="Sessa L."/>
            <person name="Sheng Y."/>
            <person name="Shibata Y."/>
            <person name="Shimada H."/>
            <person name="Shimada K."/>
            <person name="Silva D."/>
            <person name="Sinclair B."/>
            <person name="Sperling S."/>
            <person name="Stupka E."/>
            <person name="Sugiura K."/>
            <person name="Sultana R."/>
            <person name="Takenaka Y."/>
            <person name="Taki K."/>
            <person name="Tammoja K."/>
            <person name="Tan S.L."/>
            <person name="Tang S."/>
            <person name="Taylor M.S."/>
            <person name="Tegner J."/>
            <person name="Teichmann S.A."/>
            <person name="Ueda H.R."/>
            <person name="van Nimwegen E."/>
            <person name="Verardo R."/>
            <person name="Wei C.L."/>
            <person name="Yagi K."/>
            <person name="Yamanishi H."/>
            <person name="Zabarovsky E."/>
            <person name="Zhu S."/>
            <person name="Zimmer A."/>
            <person name="Hide W."/>
            <person name="Bult C."/>
            <person name="Grimmond S.M."/>
            <person name="Teasdale R.D."/>
            <person name="Liu E.T."/>
            <person name="Brusic V."/>
            <person name="Quackenbush J."/>
            <person name="Wahlestedt C."/>
            <person name="Mattick J.S."/>
            <person name="Hume D.A."/>
            <person name="Kai C."/>
            <person name="Sasaki D."/>
            <person name="Tomaru Y."/>
            <person name="Fukuda S."/>
            <person name="Kanamori-Katayama M."/>
            <person name="Suzuki M."/>
            <person name="Aoki J."/>
            <person name="Arakawa T."/>
            <person name="Iida J."/>
            <person name="Imamura K."/>
            <person name="Itoh M."/>
            <person name="Kato T."/>
            <person name="Kawaji H."/>
            <person name="Kawagashira N."/>
            <person name="Kawashima T."/>
            <person name="Kojima M."/>
            <person name="Kondo S."/>
            <person name="Konno H."/>
            <person name="Nakano K."/>
            <person name="Ninomiya N."/>
            <person name="Nishio T."/>
            <person name="Okada M."/>
            <person name="Plessy C."/>
            <person name="Shibata K."/>
            <person name="Shiraki T."/>
            <person name="Suzuki S."/>
            <person name="Tagami M."/>
            <person name="Waki K."/>
            <person name="Watahiki A."/>
            <person name="Okamura-Oho Y."/>
            <person name="Suzuki H."/>
            <person name="Kawai J."/>
            <person name="Hayashizaki Y."/>
        </authorList>
    </citation>
    <scope>NUCLEOTIDE SEQUENCE [LARGE SCALE MRNA]</scope>
    <source>
        <strain evidence="9">C57BL/6J</strain>
        <tissue evidence="8">Brain</tissue>
        <tissue evidence="9">Embryo</tissue>
    </source>
</reference>
<reference evidence="7" key="3">
    <citation type="journal article" date="2004" name="Genome Res.">
        <title>The status, quality, and expansion of the NIH full-length cDNA project: the Mammalian Gene Collection (MGC).</title>
        <authorList>
            <consortium name="The MGC Project Team"/>
        </authorList>
    </citation>
    <scope>NUCLEOTIDE SEQUENCE [LARGE SCALE MRNA]</scope>
    <source>
        <strain evidence="7">FVB/N</strain>
        <tissue evidence="7">Kidney</tissue>
    </source>
</reference>
<reference key="4">
    <citation type="journal article" date="2010" name="Cell">
        <title>A tissue-specific atlas of mouse protein phosphorylation and expression.</title>
        <authorList>
            <person name="Huttlin E.L."/>
            <person name="Jedrychowski M.P."/>
            <person name="Elias J.E."/>
            <person name="Goswami T."/>
            <person name="Rad R."/>
            <person name="Beausoleil S.A."/>
            <person name="Villen J."/>
            <person name="Haas W."/>
            <person name="Sowa M.E."/>
            <person name="Gygi S.P."/>
        </authorList>
    </citation>
    <scope>IDENTIFICATION BY MASS SPECTROMETRY [LARGE SCALE ANALYSIS]</scope>
    <source>
        <tissue>Kidney</tissue>
        <tissue>Liver</tissue>
        <tissue>Pancreas</tissue>
    </source>
</reference>
<sequence>MVPYHIRQYQDSDHKRVVDVFTKGMEEYIPSTFRHMLMLPRTLLLLLGVPLALVLVSGSWILAVICIFFLLLLLRLLARQPWKEYVAKCLQTDMVDITKSYLNVHGACFWVAESGGQVVGIVAAQPVKDPPLGRKQLQLFRLSVSSQHRGQGIAKALTRTVLQFARDQSYSDVVLETSALQQGAVTLYLGMGFKKAGQYFMSIFWRLAGICTIQLKYSFPSA</sequence>
<organism>
    <name type="scientific">Mus musculus</name>
    <name type="common">Mouse</name>
    <dbReference type="NCBI Taxonomy" id="10090"/>
    <lineage>
        <taxon>Eukaryota</taxon>
        <taxon>Metazoa</taxon>
        <taxon>Chordata</taxon>
        <taxon>Craniata</taxon>
        <taxon>Vertebrata</taxon>
        <taxon>Euteleostomi</taxon>
        <taxon>Mammalia</taxon>
        <taxon>Eutheria</taxon>
        <taxon>Euarchontoglires</taxon>
        <taxon>Glires</taxon>
        <taxon>Rodentia</taxon>
        <taxon>Myomorpha</taxon>
        <taxon>Muroidea</taxon>
        <taxon>Muridae</taxon>
        <taxon>Murinae</taxon>
        <taxon>Mus</taxon>
        <taxon>Mus</taxon>
    </lineage>
</organism>
<evidence type="ECO:0000255" key="1"/>
<evidence type="ECO:0000255" key="2">
    <source>
        <dbReference type="PROSITE-ProRule" id="PRU00532"/>
    </source>
</evidence>
<evidence type="ECO:0000269" key="3">
    <source>
    </source>
</evidence>
<evidence type="ECO:0000303" key="4">
    <source>
    </source>
</evidence>
<evidence type="ECO:0000305" key="5"/>
<evidence type="ECO:0000312" key="6">
    <source>
        <dbReference type="EMBL" id="AAF80483.1"/>
    </source>
</evidence>
<evidence type="ECO:0000312" key="7">
    <source>
        <dbReference type="EMBL" id="AAH10796.1"/>
    </source>
</evidence>
<evidence type="ECO:0000312" key="8">
    <source>
        <dbReference type="EMBL" id="BAB22489.1"/>
    </source>
</evidence>
<evidence type="ECO:0000312" key="9">
    <source>
        <dbReference type="EMBL" id="BAB22702.1"/>
    </source>
</evidence>
<evidence type="ECO:0000312" key="10">
    <source>
        <dbReference type="MGI" id="MGI:1913366"/>
    </source>
</evidence>
<comment type="function">
    <text evidence="3">May play a role in regulation of gastrulation.</text>
</comment>
<comment type="subcellular location">
    <subcellularLocation>
        <location evidence="1">Membrane</location>
        <topology evidence="1">Single-pass membrane protein</topology>
    </subcellularLocation>
</comment>
<comment type="similarity">
    <text evidence="3">Belongs to the camello family.</text>
</comment>
<accession>Q9JIZ0</accession>
<accession>Q91XE3</accession>
<accession>Q9CW77</accession>
<proteinExistence type="evidence at protein level"/>
<keyword id="KW-0012">Acyltransferase</keyword>
<keyword id="KW-0217">Developmental protein</keyword>
<keyword id="KW-0306">Gastrulation</keyword>
<keyword id="KW-0472">Membrane</keyword>
<keyword id="KW-1185">Reference proteome</keyword>
<keyword id="KW-0808">Transferase</keyword>
<keyword id="KW-0812">Transmembrane</keyword>
<keyword id="KW-1133">Transmembrane helix</keyword>
<name>CMLO1_MOUSE</name>
<gene>
    <name evidence="10" type="primary">Nat8f1</name>
    <name evidence="10" type="synonym">Cml1</name>
</gene>